<sequence length="644" mass="72435">MFQDNPLLAQLKQQLHSQTPRAEGVVKATEKGFGFLEVDAQKSYFIPPPQMKKVMHGDRIIAVIHSEKERESAEPEELVEPFLTRFVGKVQGKNDRLAIVPDHPLLKDAIPCRAARGLNHEFKEGDWAVAEMRRHPLKGDRSFYAELTQYITFGDDHFVPWWVTLARHNLEKEAPDGVATEMLDEGLVREDLTALDFVTIDSASTEDMDDALFAKALPDGKLQLIVAIADPTAWIAEGSKLDKAAKIRAFTNYLPGFNIPMLPRELSDDLCSLRANEVRPVLACRMTLSTDGTIEDNIEFFAATIESKAKLVYDQVSDWLENTGDWQPESEAIAEQVRLLAQICQRRGEWRHNHALVFKDRPDYRFILGEKGEVLDIVAEPRRIANRIVEEAMIAANICAARVLRDKLGFGIYNVHMGFDPANADALAALLKTHGLHVDAEEVLTLDGFCKLRRELDAQPTGFLDSRIRRFQSFAEISTEPGPHFGLGLEAYATWTSPIRKYGDMINHRLLKAVIKGETATRPQDEITVQMAERRRLNRMAERDVGDWLYARFLKDKAGTDTRFAAEIVDISRGGMRVRLVDNGAIAFIPAPFLHAVRDELVCSQENGTVQIKGETAYKVTDVIDVTIAEVRMETRSIIARPVA</sequence>
<accession>Q8FHT6</accession>
<keyword id="KW-0963">Cytoplasm</keyword>
<keyword id="KW-0269">Exonuclease</keyword>
<keyword id="KW-0378">Hydrolase</keyword>
<keyword id="KW-0540">Nuclease</keyword>
<keyword id="KW-1185">Reference proteome</keyword>
<keyword id="KW-0694">RNA-binding</keyword>
<proteinExistence type="inferred from homology"/>
<dbReference type="EC" id="3.1.13.1" evidence="2"/>
<dbReference type="EMBL" id="AE014075">
    <property type="protein sequence ID" value="AAN80223.1"/>
    <property type="molecule type" value="Genomic_DNA"/>
</dbReference>
<dbReference type="RefSeq" id="WP_000485012.1">
    <property type="nucleotide sequence ID" value="NZ_CP051263.1"/>
</dbReference>
<dbReference type="SMR" id="Q8FHT6"/>
<dbReference type="STRING" id="199310.c1757"/>
<dbReference type="KEGG" id="ecc:c1757"/>
<dbReference type="eggNOG" id="COG4776">
    <property type="taxonomic scope" value="Bacteria"/>
</dbReference>
<dbReference type="HOGENOM" id="CLU_002333_7_3_6"/>
<dbReference type="BioCyc" id="ECOL199310:C1757-MONOMER"/>
<dbReference type="Proteomes" id="UP000001410">
    <property type="component" value="Chromosome"/>
</dbReference>
<dbReference type="GO" id="GO:0005829">
    <property type="term" value="C:cytosol"/>
    <property type="evidence" value="ECO:0007669"/>
    <property type="project" value="TreeGrafter"/>
</dbReference>
<dbReference type="GO" id="GO:0008859">
    <property type="term" value="F:exoribonuclease II activity"/>
    <property type="evidence" value="ECO:0007669"/>
    <property type="project" value="UniProtKB-UniRule"/>
</dbReference>
<dbReference type="GO" id="GO:0003723">
    <property type="term" value="F:RNA binding"/>
    <property type="evidence" value="ECO:0007669"/>
    <property type="project" value="UniProtKB-KW"/>
</dbReference>
<dbReference type="GO" id="GO:0006402">
    <property type="term" value="P:mRNA catabolic process"/>
    <property type="evidence" value="ECO:0007669"/>
    <property type="project" value="UniProtKB-UniRule"/>
</dbReference>
<dbReference type="FunFam" id="2.40.50.140:FF:000079">
    <property type="entry name" value="Exoribonuclease 2"/>
    <property type="match status" value="1"/>
</dbReference>
<dbReference type="FunFam" id="2.40.50.140:FF:000081">
    <property type="entry name" value="Exoribonuclease 2"/>
    <property type="match status" value="1"/>
</dbReference>
<dbReference type="FunFam" id="2.40.50.640:FF:000001">
    <property type="entry name" value="Exoribonuclease 2"/>
    <property type="match status" value="1"/>
</dbReference>
<dbReference type="Gene3D" id="2.40.50.640">
    <property type="match status" value="1"/>
</dbReference>
<dbReference type="Gene3D" id="2.40.50.140">
    <property type="entry name" value="Nucleic acid-binding proteins"/>
    <property type="match status" value="2"/>
</dbReference>
<dbReference type="HAMAP" id="MF_01036">
    <property type="entry name" value="RNase_II"/>
    <property type="match status" value="1"/>
</dbReference>
<dbReference type="InterPro" id="IPR011129">
    <property type="entry name" value="CSD"/>
</dbReference>
<dbReference type="InterPro" id="IPR012340">
    <property type="entry name" value="NA-bd_OB-fold"/>
</dbReference>
<dbReference type="InterPro" id="IPR013223">
    <property type="entry name" value="RNase_B_OB_dom"/>
</dbReference>
<dbReference type="InterPro" id="IPR011804">
    <property type="entry name" value="RNase_II"/>
</dbReference>
<dbReference type="InterPro" id="IPR001900">
    <property type="entry name" value="RNase_II/R"/>
</dbReference>
<dbReference type="InterPro" id="IPR022966">
    <property type="entry name" value="RNase_II/R_CS"/>
</dbReference>
<dbReference type="InterPro" id="IPR004476">
    <property type="entry name" value="RNase_II/RNase_R"/>
</dbReference>
<dbReference type="InterPro" id="IPR050180">
    <property type="entry name" value="RNR_Ribonuclease"/>
</dbReference>
<dbReference type="InterPro" id="IPR003029">
    <property type="entry name" value="S1_domain"/>
</dbReference>
<dbReference type="NCBIfam" id="TIGR00358">
    <property type="entry name" value="3_prime_RNase"/>
    <property type="match status" value="1"/>
</dbReference>
<dbReference type="NCBIfam" id="NF003455">
    <property type="entry name" value="PRK05054.1"/>
    <property type="match status" value="1"/>
</dbReference>
<dbReference type="NCBIfam" id="TIGR02062">
    <property type="entry name" value="RNase_B"/>
    <property type="match status" value="1"/>
</dbReference>
<dbReference type="PANTHER" id="PTHR23355:SF37">
    <property type="entry name" value="EXORIBONUCLEASE 2"/>
    <property type="match status" value="1"/>
</dbReference>
<dbReference type="PANTHER" id="PTHR23355">
    <property type="entry name" value="RIBONUCLEASE"/>
    <property type="match status" value="1"/>
</dbReference>
<dbReference type="Pfam" id="PF08206">
    <property type="entry name" value="OB_RNB"/>
    <property type="match status" value="1"/>
</dbReference>
<dbReference type="Pfam" id="PF00773">
    <property type="entry name" value="RNB"/>
    <property type="match status" value="1"/>
</dbReference>
<dbReference type="Pfam" id="PF00575">
    <property type="entry name" value="S1"/>
    <property type="match status" value="1"/>
</dbReference>
<dbReference type="SMART" id="SM00357">
    <property type="entry name" value="CSP"/>
    <property type="match status" value="1"/>
</dbReference>
<dbReference type="SMART" id="SM00955">
    <property type="entry name" value="RNB"/>
    <property type="match status" value="1"/>
</dbReference>
<dbReference type="SUPFAM" id="SSF50249">
    <property type="entry name" value="Nucleic acid-binding proteins"/>
    <property type="match status" value="4"/>
</dbReference>
<dbReference type="PROSITE" id="PS01175">
    <property type="entry name" value="RIBONUCLEASE_II"/>
    <property type="match status" value="1"/>
</dbReference>
<organism>
    <name type="scientific">Escherichia coli O6:H1 (strain CFT073 / ATCC 700928 / UPEC)</name>
    <dbReference type="NCBI Taxonomy" id="199310"/>
    <lineage>
        <taxon>Bacteria</taxon>
        <taxon>Pseudomonadati</taxon>
        <taxon>Pseudomonadota</taxon>
        <taxon>Gammaproteobacteria</taxon>
        <taxon>Enterobacterales</taxon>
        <taxon>Enterobacteriaceae</taxon>
        <taxon>Escherichia</taxon>
    </lineage>
</organism>
<feature type="chain" id="PRO_0000166381" description="Exoribonuclease 2">
    <location>
        <begin position="1"/>
        <end position="644"/>
    </location>
</feature>
<feature type="domain" description="RNB" evidence="1">
    <location>
        <begin position="189"/>
        <end position="516"/>
    </location>
</feature>
<feature type="domain" description="S1 motif" evidence="2">
    <location>
        <begin position="561"/>
        <end position="643"/>
    </location>
</feature>
<name>RNB_ECOL6</name>
<reference key="1">
    <citation type="journal article" date="2002" name="Proc. Natl. Acad. Sci. U.S.A.">
        <title>Extensive mosaic structure revealed by the complete genome sequence of uropathogenic Escherichia coli.</title>
        <authorList>
            <person name="Welch R.A."/>
            <person name="Burland V."/>
            <person name="Plunkett G. III"/>
            <person name="Redford P."/>
            <person name="Roesch P."/>
            <person name="Rasko D."/>
            <person name="Buckles E.L."/>
            <person name="Liou S.-R."/>
            <person name="Boutin A."/>
            <person name="Hackett J."/>
            <person name="Stroud D."/>
            <person name="Mayhew G.F."/>
            <person name="Rose D.J."/>
            <person name="Zhou S."/>
            <person name="Schwartz D.C."/>
            <person name="Perna N.T."/>
            <person name="Mobley H.L.T."/>
            <person name="Donnenberg M.S."/>
            <person name="Blattner F.R."/>
        </authorList>
    </citation>
    <scope>NUCLEOTIDE SEQUENCE [LARGE SCALE GENOMIC DNA]</scope>
    <source>
        <strain>CFT073 / ATCC 700928 / UPEC</strain>
    </source>
</reference>
<protein>
    <recommendedName>
        <fullName evidence="2">Exoribonuclease 2</fullName>
        <ecNumber evidence="2">3.1.13.1</ecNumber>
    </recommendedName>
    <alternativeName>
        <fullName evidence="2">Exoribonuclease II</fullName>
        <shortName evidence="2">RNase II</shortName>
        <shortName evidence="2">Ribonuclease II</shortName>
    </alternativeName>
</protein>
<gene>
    <name evidence="2" type="primary">rnb</name>
    <name type="ordered locus">c1757</name>
</gene>
<comment type="function">
    <text evidence="2">Involved in mRNA degradation. Hydrolyzes single-stranded polyribonucleotides processively in the 3' to 5' direction.</text>
</comment>
<comment type="catalytic activity">
    <reaction evidence="2">
        <text>Exonucleolytic cleavage in the 3'- to 5'-direction to yield nucleoside 5'-phosphates.</text>
        <dbReference type="EC" id="3.1.13.1"/>
    </reaction>
</comment>
<comment type="subcellular location">
    <subcellularLocation>
        <location evidence="2">Cytoplasm</location>
    </subcellularLocation>
</comment>
<comment type="similarity">
    <text evidence="2">Belongs to the RNR ribonuclease family. RNase II subfamily.</text>
</comment>
<evidence type="ECO:0000255" key="1"/>
<evidence type="ECO:0000255" key="2">
    <source>
        <dbReference type="HAMAP-Rule" id="MF_01036"/>
    </source>
</evidence>